<dbReference type="EC" id="2.1.1.177" evidence="1"/>
<dbReference type="EMBL" id="CP000538">
    <property type="protein sequence ID" value="EAQ73003.1"/>
    <property type="molecule type" value="Genomic_DNA"/>
</dbReference>
<dbReference type="RefSeq" id="WP_002857335.1">
    <property type="nucleotide sequence ID" value="NC_008787.1"/>
</dbReference>
<dbReference type="SMR" id="A1VXK9"/>
<dbReference type="KEGG" id="cjj:CJJ81176_0161"/>
<dbReference type="eggNOG" id="COG1576">
    <property type="taxonomic scope" value="Bacteria"/>
</dbReference>
<dbReference type="HOGENOM" id="CLU_100552_2_1_7"/>
<dbReference type="Proteomes" id="UP000000646">
    <property type="component" value="Chromosome"/>
</dbReference>
<dbReference type="GO" id="GO:0005737">
    <property type="term" value="C:cytoplasm"/>
    <property type="evidence" value="ECO:0007669"/>
    <property type="project" value="UniProtKB-SubCell"/>
</dbReference>
<dbReference type="GO" id="GO:0070038">
    <property type="term" value="F:rRNA (pseudouridine-N3-)-methyltransferase activity"/>
    <property type="evidence" value="ECO:0007669"/>
    <property type="project" value="UniProtKB-UniRule"/>
</dbReference>
<dbReference type="CDD" id="cd18081">
    <property type="entry name" value="RlmH-like"/>
    <property type="match status" value="1"/>
</dbReference>
<dbReference type="Gene3D" id="3.40.1280.10">
    <property type="match status" value="1"/>
</dbReference>
<dbReference type="HAMAP" id="MF_00658">
    <property type="entry name" value="23SrRNA_methyltr_H"/>
    <property type="match status" value="1"/>
</dbReference>
<dbReference type="InterPro" id="IPR029028">
    <property type="entry name" value="Alpha/beta_knot_MTases"/>
</dbReference>
<dbReference type="InterPro" id="IPR003742">
    <property type="entry name" value="RlmH-like"/>
</dbReference>
<dbReference type="InterPro" id="IPR029026">
    <property type="entry name" value="tRNA_m1G_MTases_N"/>
</dbReference>
<dbReference type="PANTHER" id="PTHR33603">
    <property type="entry name" value="METHYLTRANSFERASE"/>
    <property type="match status" value="1"/>
</dbReference>
<dbReference type="PANTHER" id="PTHR33603:SF1">
    <property type="entry name" value="RIBOSOMAL RNA LARGE SUBUNIT METHYLTRANSFERASE H"/>
    <property type="match status" value="1"/>
</dbReference>
<dbReference type="Pfam" id="PF02590">
    <property type="entry name" value="SPOUT_MTase"/>
    <property type="match status" value="1"/>
</dbReference>
<dbReference type="PIRSF" id="PIRSF004505">
    <property type="entry name" value="MT_bac"/>
    <property type="match status" value="1"/>
</dbReference>
<dbReference type="SUPFAM" id="SSF75217">
    <property type="entry name" value="alpha/beta knot"/>
    <property type="match status" value="1"/>
</dbReference>
<organism>
    <name type="scientific">Campylobacter jejuni subsp. jejuni serotype O:23/36 (strain 81-176)</name>
    <dbReference type="NCBI Taxonomy" id="354242"/>
    <lineage>
        <taxon>Bacteria</taxon>
        <taxon>Pseudomonadati</taxon>
        <taxon>Campylobacterota</taxon>
        <taxon>Epsilonproteobacteria</taxon>
        <taxon>Campylobacterales</taxon>
        <taxon>Campylobacteraceae</taxon>
        <taxon>Campylobacter</taxon>
    </lineage>
</organism>
<name>RLMH_CAMJJ</name>
<reference key="1">
    <citation type="submission" date="2006-12" db="EMBL/GenBank/DDBJ databases">
        <authorList>
            <person name="Fouts D.E."/>
            <person name="Nelson K.E."/>
            <person name="Sebastian Y."/>
        </authorList>
    </citation>
    <scope>NUCLEOTIDE SEQUENCE [LARGE SCALE GENOMIC DNA]</scope>
    <source>
        <strain>81-176</strain>
    </source>
</reference>
<gene>
    <name evidence="1" type="primary">rlmH</name>
    <name type="ordered locus">CJJ81176_0161</name>
</gene>
<proteinExistence type="inferred from homology"/>
<protein>
    <recommendedName>
        <fullName evidence="1">Ribosomal RNA large subunit methyltransferase H</fullName>
        <ecNumber evidence="1">2.1.1.177</ecNumber>
    </recommendedName>
    <alternativeName>
        <fullName evidence="1">23S rRNA (pseudouridine1915-N3)-methyltransferase</fullName>
    </alternativeName>
    <alternativeName>
        <fullName evidence="1">23S rRNA m3Psi1915 methyltransferase</fullName>
    </alternativeName>
    <alternativeName>
        <fullName evidence="1">rRNA (pseudouridine-N3-)-methyltransferase RlmH</fullName>
    </alternativeName>
</protein>
<feature type="chain" id="PRO_1000061771" description="Ribosomal RNA large subunit methyltransferase H">
    <location>
        <begin position="1"/>
        <end position="149"/>
    </location>
</feature>
<feature type="binding site" evidence="1">
    <location>
        <position position="71"/>
    </location>
    <ligand>
        <name>S-adenosyl-L-methionine</name>
        <dbReference type="ChEBI" id="CHEBI:59789"/>
    </ligand>
</feature>
<feature type="binding site" evidence="1">
    <location>
        <position position="98"/>
    </location>
    <ligand>
        <name>S-adenosyl-L-methionine</name>
        <dbReference type="ChEBI" id="CHEBI:59789"/>
    </ligand>
</feature>
<feature type="binding site" evidence="1">
    <location>
        <begin position="117"/>
        <end position="122"/>
    </location>
    <ligand>
        <name>S-adenosyl-L-methionine</name>
        <dbReference type="ChEBI" id="CHEBI:59789"/>
    </ligand>
</feature>
<keyword id="KW-0963">Cytoplasm</keyword>
<keyword id="KW-0489">Methyltransferase</keyword>
<keyword id="KW-0698">rRNA processing</keyword>
<keyword id="KW-0949">S-adenosyl-L-methionine</keyword>
<keyword id="KW-0808">Transferase</keyword>
<comment type="function">
    <text evidence="1">Specifically methylates the pseudouridine at position 1915 (m3Psi1915) in 23S rRNA.</text>
</comment>
<comment type="catalytic activity">
    <reaction evidence="1">
        <text>pseudouridine(1915) in 23S rRNA + S-adenosyl-L-methionine = N(3)-methylpseudouridine(1915) in 23S rRNA + S-adenosyl-L-homocysteine + H(+)</text>
        <dbReference type="Rhea" id="RHEA:42752"/>
        <dbReference type="Rhea" id="RHEA-COMP:10221"/>
        <dbReference type="Rhea" id="RHEA-COMP:10222"/>
        <dbReference type="ChEBI" id="CHEBI:15378"/>
        <dbReference type="ChEBI" id="CHEBI:57856"/>
        <dbReference type="ChEBI" id="CHEBI:59789"/>
        <dbReference type="ChEBI" id="CHEBI:65314"/>
        <dbReference type="ChEBI" id="CHEBI:74486"/>
        <dbReference type="EC" id="2.1.1.177"/>
    </reaction>
</comment>
<comment type="subunit">
    <text evidence="1">Homodimer.</text>
</comment>
<comment type="subcellular location">
    <subcellularLocation>
        <location evidence="1">Cytoplasm</location>
    </subcellularLocation>
</comment>
<comment type="similarity">
    <text evidence="1">Belongs to the RNA methyltransferase RlmH family.</text>
</comment>
<evidence type="ECO:0000255" key="1">
    <source>
        <dbReference type="HAMAP-Rule" id="MF_00658"/>
    </source>
</evidence>
<sequence>MQVNIFCIQKSDEFKTWSEKYSKLISKYATLKEINVFNKKIALAQNLNAIEAKKSYEEAFMPYKKGYCIALDEKGKDLTSIEFAKLIQDKNELSFFIGGAYGLREEFNQSLDFRLSLSKLTLAHQFVKTLLLEQIYRAFCINNNHPYHK</sequence>
<accession>A1VXK9</accession>